<reference key="1">
    <citation type="journal article" date="2003" name="Nature">
        <title>Single origin of Malagasy Carnivora from an African ancestor.</title>
        <authorList>
            <person name="Yoder A.D."/>
            <person name="Burns M.M."/>
            <person name="Zehr S."/>
            <person name="Delefosse T."/>
            <person name="Veron G."/>
            <person name="Goodman S.M."/>
            <person name="Flynn J.J."/>
        </authorList>
    </citation>
    <scope>NUCLEOTIDE SEQUENCE [GENOMIC DNA]</scope>
    <source>
        <strain>Isolate SDZ-32188</strain>
    </source>
</reference>
<comment type="function">
    <text evidence="2">Component of the ubiquinol-cytochrome c reductase complex (complex III or cytochrome b-c1 complex) that is part of the mitochondrial respiratory chain. The b-c1 complex mediates electron transfer from ubiquinol to cytochrome c. Contributes to the generation of a proton gradient across the mitochondrial membrane that is then used for ATP synthesis.</text>
</comment>
<comment type="cofactor">
    <cofactor evidence="2">
        <name>heme b</name>
        <dbReference type="ChEBI" id="CHEBI:60344"/>
    </cofactor>
    <text evidence="2">Binds 2 heme b groups non-covalently.</text>
</comment>
<comment type="subunit">
    <text evidence="2">The cytochrome bc1 complex contains 11 subunits: 3 respiratory subunits (MT-CYB, CYC1 and UQCRFS1), 2 core proteins (UQCRC1 and UQCRC2) and 6 low-molecular weight proteins (UQCRH/QCR6, UQCRB/QCR7, UQCRQ/QCR8, UQCR10/QCR9, UQCR11/QCR10 and a cleavage product of UQCRFS1). This cytochrome bc1 complex then forms a dimer.</text>
</comment>
<comment type="subcellular location">
    <subcellularLocation>
        <location evidence="2">Mitochondrion inner membrane</location>
        <topology evidence="2">Multi-pass membrane protein</topology>
    </subcellularLocation>
</comment>
<comment type="miscellaneous">
    <text evidence="1">Heme 1 (or BL or b562) is low-potential and absorbs at about 562 nm, and heme 2 (or BH or b566) is high-potential and absorbs at about 566 nm.</text>
</comment>
<comment type="similarity">
    <text evidence="3 4">Belongs to the cytochrome b family.</text>
</comment>
<comment type="caution">
    <text evidence="2">The full-length protein contains only eight transmembrane helices, not nine as predicted by bioinformatics tools.</text>
</comment>
<dbReference type="EMBL" id="AY170102">
    <property type="protein sequence ID" value="AAN85621.1"/>
    <property type="molecule type" value="Genomic_DNA"/>
</dbReference>
<dbReference type="SMR" id="Q85PN6"/>
<dbReference type="GO" id="GO:0005743">
    <property type="term" value="C:mitochondrial inner membrane"/>
    <property type="evidence" value="ECO:0007669"/>
    <property type="project" value="UniProtKB-SubCell"/>
</dbReference>
<dbReference type="GO" id="GO:0045275">
    <property type="term" value="C:respiratory chain complex III"/>
    <property type="evidence" value="ECO:0007669"/>
    <property type="project" value="InterPro"/>
</dbReference>
<dbReference type="GO" id="GO:0046872">
    <property type="term" value="F:metal ion binding"/>
    <property type="evidence" value="ECO:0007669"/>
    <property type="project" value="UniProtKB-KW"/>
</dbReference>
<dbReference type="GO" id="GO:0008121">
    <property type="term" value="F:ubiquinol-cytochrome-c reductase activity"/>
    <property type="evidence" value="ECO:0007669"/>
    <property type="project" value="InterPro"/>
</dbReference>
<dbReference type="GO" id="GO:0006122">
    <property type="term" value="P:mitochondrial electron transport, ubiquinol to cytochrome c"/>
    <property type="evidence" value="ECO:0007669"/>
    <property type="project" value="TreeGrafter"/>
</dbReference>
<dbReference type="CDD" id="cd00290">
    <property type="entry name" value="cytochrome_b_C"/>
    <property type="match status" value="1"/>
</dbReference>
<dbReference type="CDD" id="cd00284">
    <property type="entry name" value="Cytochrome_b_N"/>
    <property type="match status" value="1"/>
</dbReference>
<dbReference type="FunFam" id="1.20.810.10:FF:000002">
    <property type="entry name" value="Cytochrome b"/>
    <property type="match status" value="1"/>
</dbReference>
<dbReference type="Gene3D" id="1.20.810.10">
    <property type="entry name" value="Cytochrome Bc1 Complex, Chain C"/>
    <property type="match status" value="1"/>
</dbReference>
<dbReference type="InterPro" id="IPR005798">
    <property type="entry name" value="Cyt_b/b6_C"/>
</dbReference>
<dbReference type="InterPro" id="IPR036150">
    <property type="entry name" value="Cyt_b/b6_C_sf"/>
</dbReference>
<dbReference type="InterPro" id="IPR005797">
    <property type="entry name" value="Cyt_b/b6_N"/>
</dbReference>
<dbReference type="InterPro" id="IPR027387">
    <property type="entry name" value="Cytb/b6-like_sf"/>
</dbReference>
<dbReference type="InterPro" id="IPR030689">
    <property type="entry name" value="Cytochrome_b"/>
</dbReference>
<dbReference type="InterPro" id="IPR048260">
    <property type="entry name" value="Cytochrome_b_C_euk/bac"/>
</dbReference>
<dbReference type="InterPro" id="IPR048259">
    <property type="entry name" value="Cytochrome_b_N_euk/bac"/>
</dbReference>
<dbReference type="InterPro" id="IPR016174">
    <property type="entry name" value="Di-haem_cyt_TM"/>
</dbReference>
<dbReference type="PANTHER" id="PTHR19271">
    <property type="entry name" value="CYTOCHROME B"/>
    <property type="match status" value="1"/>
</dbReference>
<dbReference type="PANTHER" id="PTHR19271:SF16">
    <property type="entry name" value="CYTOCHROME B"/>
    <property type="match status" value="1"/>
</dbReference>
<dbReference type="Pfam" id="PF00032">
    <property type="entry name" value="Cytochrom_B_C"/>
    <property type="match status" value="1"/>
</dbReference>
<dbReference type="Pfam" id="PF00033">
    <property type="entry name" value="Cytochrome_B"/>
    <property type="match status" value="1"/>
</dbReference>
<dbReference type="PIRSF" id="PIRSF038885">
    <property type="entry name" value="COB"/>
    <property type="match status" value="1"/>
</dbReference>
<dbReference type="SUPFAM" id="SSF81648">
    <property type="entry name" value="a domain/subunit of cytochrome bc1 complex (Ubiquinol-cytochrome c reductase)"/>
    <property type="match status" value="1"/>
</dbReference>
<dbReference type="SUPFAM" id="SSF81342">
    <property type="entry name" value="Transmembrane di-heme cytochromes"/>
    <property type="match status" value="1"/>
</dbReference>
<dbReference type="PROSITE" id="PS51003">
    <property type="entry name" value="CYTB_CTER"/>
    <property type="match status" value="1"/>
</dbReference>
<dbReference type="PROSITE" id="PS51002">
    <property type="entry name" value="CYTB_NTER"/>
    <property type="match status" value="1"/>
</dbReference>
<keyword id="KW-0249">Electron transport</keyword>
<keyword id="KW-0349">Heme</keyword>
<keyword id="KW-0408">Iron</keyword>
<keyword id="KW-0472">Membrane</keyword>
<keyword id="KW-0479">Metal-binding</keyword>
<keyword id="KW-0496">Mitochondrion</keyword>
<keyword id="KW-0999">Mitochondrion inner membrane</keyword>
<keyword id="KW-0679">Respiratory chain</keyword>
<keyword id="KW-0812">Transmembrane</keyword>
<keyword id="KW-1133">Transmembrane helix</keyword>
<keyword id="KW-0813">Transport</keyword>
<keyword id="KW-0830">Ubiquinone</keyword>
<proteinExistence type="inferred from homology"/>
<geneLocation type="mitochondrion"/>
<feature type="chain" id="PRO_0000060973" description="Cytochrome b">
    <location>
        <begin position="1"/>
        <end position="379"/>
    </location>
</feature>
<feature type="transmembrane region" description="Helical" evidence="2">
    <location>
        <begin position="33"/>
        <end position="53"/>
    </location>
</feature>
<feature type="transmembrane region" description="Helical" evidence="2">
    <location>
        <begin position="77"/>
        <end position="98"/>
    </location>
</feature>
<feature type="transmembrane region" description="Helical" evidence="2">
    <location>
        <begin position="113"/>
        <end position="133"/>
    </location>
</feature>
<feature type="transmembrane region" description="Helical" evidence="2">
    <location>
        <begin position="178"/>
        <end position="198"/>
    </location>
</feature>
<feature type="transmembrane region" description="Helical" evidence="2">
    <location>
        <begin position="226"/>
        <end position="246"/>
    </location>
</feature>
<feature type="transmembrane region" description="Helical" evidence="2">
    <location>
        <begin position="288"/>
        <end position="308"/>
    </location>
</feature>
<feature type="transmembrane region" description="Helical" evidence="2">
    <location>
        <begin position="320"/>
        <end position="340"/>
    </location>
</feature>
<feature type="transmembrane region" description="Helical" evidence="2">
    <location>
        <begin position="347"/>
        <end position="367"/>
    </location>
</feature>
<feature type="binding site" description="axial binding residue" evidence="2">
    <location>
        <position position="83"/>
    </location>
    <ligand>
        <name>heme b</name>
        <dbReference type="ChEBI" id="CHEBI:60344"/>
        <label>b562</label>
    </ligand>
    <ligandPart>
        <name>Fe</name>
        <dbReference type="ChEBI" id="CHEBI:18248"/>
    </ligandPart>
</feature>
<feature type="binding site" description="axial binding residue" evidence="2">
    <location>
        <position position="97"/>
    </location>
    <ligand>
        <name>heme b</name>
        <dbReference type="ChEBI" id="CHEBI:60344"/>
        <label>b566</label>
    </ligand>
    <ligandPart>
        <name>Fe</name>
        <dbReference type="ChEBI" id="CHEBI:18248"/>
    </ligandPart>
</feature>
<feature type="binding site" description="axial binding residue" evidence="2">
    <location>
        <position position="182"/>
    </location>
    <ligand>
        <name>heme b</name>
        <dbReference type="ChEBI" id="CHEBI:60344"/>
        <label>b562</label>
    </ligand>
    <ligandPart>
        <name>Fe</name>
        <dbReference type="ChEBI" id="CHEBI:18248"/>
    </ligandPart>
</feature>
<feature type="binding site" description="axial binding residue" evidence="2">
    <location>
        <position position="196"/>
    </location>
    <ligand>
        <name>heme b</name>
        <dbReference type="ChEBI" id="CHEBI:60344"/>
        <label>b566</label>
    </ligand>
    <ligandPart>
        <name>Fe</name>
        <dbReference type="ChEBI" id="CHEBI:18248"/>
    </ligandPart>
</feature>
<feature type="binding site" evidence="2">
    <location>
        <position position="201"/>
    </location>
    <ligand>
        <name>a ubiquinone</name>
        <dbReference type="ChEBI" id="CHEBI:16389"/>
    </ligand>
</feature>
<gene>
    <name type="primary">MT-CYB</name>
    <name type="synonym">COB</name>
    <name type="synonym">CYTB</name>
    <name type="synonym">MTCYB</name>
</gene>
<sequence>MTNIRKSHPLIKIINHSFIDLPAPSNISAWWNFGSLLGVCLILQILTGLFLAMHYTSDTMTAFSSVTHICRDVNYGWIIRYLHANGASMFFICLYMHVGRGMYYGSYTFSETWNIGIMLLFTVMATAFMGYVLPWGQMSFWGATVITNLLSAIPYIGTELVEWIWGGFSVDKATLTRFFAFHFILPFIISALAAVHLLFLHETGSNNPSGITSDSDKIPFHPYYTIKDILGLLVLVLTLMLLVLFSPDLLGDPDNYIPANPLNTPPHIKPEWYFLFAYAILRSIPNKLGGVLALVLSILVLAIIPILHTSKQRGMMFRPLSQCLFWLLVADLLTLTWIGGQPVEHPFITIGQLASILYFSTLLILMPISGIIENRLLKW</sequence>
<accession>Q85PN6</accession>
<protein>
    <recommendedName>
        <fullName>Cytochrome b</fullName>
    </recommendedName>
    <alternativeName>
        <fullName>Complex III subunit 3</fullName>
    </alternativeName>
    <alternativeName>
        <fullName>Complex III subunit III</fullName>
    </alternativeName>
    <alternativeName>
        <fullName>Cytochrome b-c1 complex subunit 3</fullName>
    </alternativeName>
    <alternativeName>
        <fullName>Ubiquinol-cytochrome-c reductase complex cytochrome b subunit</fullName>
    </alternativeName>
</protein>
<organism>
    <name type="scientific">Felis silvestris</name>
    <name type="common">Wild cat</name>
    <dbReference type="NCBI Taxonomy" id="9683"/>
    <lineage>
        <taxon>Eukaryota</taxon>
        <taxon>Metazoa</taxon>
        <taxon>Chordata</taxon>
        <taxon>Craniata</taxon>
        <taxon>Vertebrata</taxon>
        <taxon>Euteleostomi</taxon>
        <taxon>Mammalia</taxon>
        <taxon>Eutheria</taxon>
        <taxon>Laurasiatheria</taxon>
        <taxon>Carnivora</taxon>
        <taxon>Feliformia</taxon>
        <taxon>Felidae</taxon>
        <taxon>Felinae</taxon>
        <taxon>Felis</taxon>
    </lineage>
</organism>
<name>CYB_FELSI</name>
<evidence type="ECO:0000250" key="1"/>
<evidence type="ECO:0000250" key="2">
    <source>
        <dbReference type="UniProtKB" id="P00157"/>
    </source>
</evidence>
<evidence type="ECO:0000255" key="3">
    <source>
        <dbReference type="PROSITE-ProRule" id="PRU00967"/>
    </source>
</evidence>
<evidence type="ECO:0000255" key="4">
    <source>
        <dbReference type="PROSITE-ProRule" id="PRU00968"/>
    </source>
</evidence>